<gene>
    <name evidence="1" type="primary">mobA</name>
    <name type="ordered locus">Mpe_A2521</name>
</gene>
<keyword id="KW-0963">Cytoplasm</keyword>
<keyword id="KW-0342">GTP-binding</keyword>
<keyword id="KW-0460">Magnesium</keyword>
<keyword id="KW-0479">Metal-binding</keyword>
<keyword id="KW-0501">Molybdenum cofactor biosynthesis</keyword>
<keyword id="KW-0547">Nucleotide-binding</keyword>
<keyword id="KW-1185">Reference proteome</keyword>
<keyword id="KW-0808">Transferase</keyword>
<dbReference type="EC" id="2.7.7.77" evidence="1"/>
<dbReference type="EMBL" id="CP000555">
    <property type="protein sequence ID" value="ABM95476.1"/>
    <property type="molecule type" value="Genomic_DNA"/>
</dbReference>
<dbReference type="RefSeq" id="WP_011830109.1">
    <property type="nucleotide sequence ID" value="NC_008825.1"/>
</dbReference>
<dbReference type="SMR" id="A2SIT7"/>
<dbReference type="STRING" id="420662.Mpe_A2521"/>
<dbReference type="KEGG" id="mpt:Mpe_A2521"/>
<dbReference type="eggNOG" id="COG0746">
    <property type="taxonomic scope" value="Bacteria"/>
</dbReference>
<dbReference type="HOGENOM" id="CLU_055597_5_1_4"/>
<dbReference type="Proteomes" id="UP000000366">
    <property type="component" value="Chromosome"/>
</dbReference>
<dbReference type="GO" id="GO:0005737">
    <property type="term" value="C:cytoplasm"/>
    <property type="evidence" value="ECO:0007669"/>
    <property type="project" value="UniProtKB-SubCell"/>
</dbReference>
<dbReference type="GO" id="GO:0005525">
    <property type="term" value="F:GTP binding"/>
    <property type="evidence" value="ECO:0007669"/>
    <property type="project" value="UniProtKB-UniRule"/>
</dbReference>
<dbReference type="GO" id="GO:0046872">
    <property type="term" value="F:metal ion binding"/>
    <property type="evidence" value="ECO:0007669"/>
    <property type="project" value="UniProtKB-KW"/>
</dbReference>
<dbReference type="GO" id="GO:0061603">
    <property type="term" value="F:molybdenum cofactor guanylyltransferase activity"/>
    <property type="evidence" value="ECO:0007669"/>
    <property type="project" value="UniProtKB-EC"/>
</dbReference>
<dbReference type="GO" id="GO:1902758">
    <property type="term" value="P:bis(molybdopterin guanine dinucleotide)molybdenum biosynthetic process"/>
    <property type="evidence" value="ECO:0007669"/>
    <property type="project" value="TreeGrafter"/>
</dbReference>
<dbReference type="CDD" id="cd02503">
    <property type="entry name" value="MobA"/>
    <property type="match status" value="1"/>
</dbReference>
<dbReference type="Gene3D" id="3.90.550.10">
    <property type="entry name" value="Spore Coat Polysaccharide Biosynthesis Protein SpsA, Chain A"/>
    <property type="match status" value="1"/>
</dbReference>
<dbReference type="HAMAP" id="MF_00316">
    <property type="entry name" value="MobA"/>
    <property type="match status" value="1"/>
</dbReference>
<dbReference type="InterPro" id="IPR025877">
    <property type="entry name" value="MobA-like_NTP_Trfase"/>
</dbReference>
<dbReference type="InterPro" id="IPR013482">
    <property type="entry name" value="Molybde_CF_guanTrfase"/>
</dbReference>
<dbReference type="InterPro" id="IPR029044">
    <property type="entry name" value="Nucleotide-diphossugar_trans"/>
</dbReference>
<dbReference type="NCBIfam" id="TIGR02665">
    <property type="entry name" value="molyb_mobA"/>
    <property type="match status" value="1"/>
</dbReference>
<dbReference type="PANTHER" id="PTHR19136">
    <property type="entry name" value="MOLYBDENUM COFACTOR GUANYLYLTRANSFERASE"/>
    <property type="match status" value="1"/>
</dbReference>
<dbReference type="PANTHER" id="PTHR19136:SF81">
    <property type="entry name" value="MOLYBDENUM COFACTOR GUANYLYLTRANSFERASE"/>
    <property type="match status" value="1"/>
</dbReference>
<dbReference type="Pfam" id="PF12804">
    <property type="entry name" value="NTP_transf_3"/>
    <property type="match status" value="1"/>
</dbReference>
<dbReference type="SUPFAM" id="SSF53448">
    <property type="entry name" value="Nucleotide-diphospho-sugar transferases"/>
    <property type="match status" value="1"/>
</dbReference>
<sequence>MIGAEHITGVVLAGGRGSRMGGVDKGLQPYRGIPLALHALMRLQPQVGTTMINANRNLAAYESFGVPVWPDTDPDFAGPLSGFLVGLERAETPFVVTVPCDTPDFPDDLVARLAHALEAEDAELAMVRAPDSADAPGAPRPQPVFCLLRSTLLESLVRFVHAGGRKIDRWTAQHRCAMVDFDAAPFFNANTLDELRRLETQRV</sequence>
<protein>
    <recommendedName>
        <fullName evidence="1">Molybdenum cofactor guanylyltransferase</fullName>
        <shortName evidence="1">MoCo guanylyltransferase</shortName>
        <ecNumber evidence="1">2.7.7.77</ecNumber>
    </recommendedName>
    <alternativeName>
        <fullName evidence="1">GTP:molybdopterin guanylyltransferase</fullName>
    </alternativeName>
    <alternativeName>
        <fullName evidence="1">Mo-MPT guanylyltransferase</fullName>
    </alternativeName>
    <alternativeName>
        <fullName evidence="1">Molybdopterin guanylyltransferase</fullName>
    </alternativeName>
    <alternativeName>
        <fullName evidence="1">Molybdopterin-guanine dinucleotide synthase</fullName>
        <shortName evidence="1">MGD synthase</shortName>
    </alternativeName>
</protein>
<proteinExistence type="inferred from homology"/>
<feature type="chain" id="PRO_1000019123" description="Molybdenum cofactor guanylyltransferase">
    <location>
        <begin position="1"/>
        <end position="203"/>
    </location>
</feature>
<feature type="binding site" evidence="1">
    <location>
        <begin position="12"/>
        <end position="14"/>
    </location>
    <ligand>
        <name>GTP</name>
        <dbReference type="ChEBI" id="CHEBI:37565"/>
    </ligand>
</feature>
<feature type="binding site" evidence="1">
    <location>
        <position position="25"/>
    </location>
    <ligand>
        <name>GTP</name>
        <dbReference type="ChEBI" id="CHEBI:37565"/>
    </ligand>
</feature>
<feature type="binding site" evidence="1">
    <location>
        <position position="53"/>
    </location>
    <ligand>
        <name>GTP</name>
        <dbReference type="ChEBI" id="CHEBI:37565"/>
    </ligand>
</feature>
<feature type="binding site" evidence="1">
    <location>
        <position position="71"/>
    </location>
    <ligand>
        <name>GTP</name>
        <dbReference type="ChEBI" id="CHEBI:37565"/>
    </ligand>
</feature>
<feature type="binding site" evidence="1">
    <location>
        <position position="101"/>
    </location>
    <ligand>
        <name>GTP</name>
        <dbReference type="ChEBI" id="CHEBI:37565"/>
    </ligand>
</feature>
<feature type="binding site" evidence="1">
    <location>
        <position position="101"/>
    </location>
    <ligand>
        <name>Mg(2+)</name>
        <dbReference type="ChEBI" id="CHEBI:18420"/>
    </ligand>
</feature>
<name>MOBA_METPP</name>
<accession>A2SIT7</accession>
<reference key="1">
    <citation type="journal article" date="2007" name="J. Bacteriol.">
        <title>Whole-genome analysis of the methyl tert-butyl ether-degrading beta-proteobacterium Methylibium petroleiphilum PM1.</title>
        <authorList>
            <person name="Kane S.R."/>
            <person name="Chakicherla A.Y."/>
            <person name="Chain P.S.G."/>
            <person name="Schmidt R."/>
            <person name="Shin M.W."/>
            <person name="Legler T.C."/>
            <person name="Scow K.M."/>
            <person name="Larimer F.W."/>
            <person name="Lucas S.M."/>
            <person name="Richardson P.M."/>
            <person name="Hristova K.R."/>
        </authorList>
    </citation>
    <scope>NUCLEOTIDE SEQUENCE [LARGE SCALE GENOMIC DNA]</scope>
    <source>
        <strain>ATCC BAA-1232 / LMG 22953 / PM1</strain>
    </source>
</reference>
<organism>
    <name type="scientific">Methylibium petroleiphilum (strain ATCC BAA-1232 / LMG 22953 / PM1)</name>
    <dbReference type="NCBI Taxonomy" id="420662"/>
    <lineage>
        <taxon>Bacteria</taxon>
        <taxon>Pseudomonadati</taxon>
        <taxon>Pseudomonadota</taxon>
        <taxon>Betaproteobacteria</taxon>
        <taxon>Burkholderiales</taxon>
        <taxon>Sphaerotilaceae</taxon>
        <taxon>Methylibium</taxon>
    </lineage>
</organism>
<comment type="function">
    <text evidence="1">Transfers a GMP moiety from GTP to Mo-molybdopterin (Mo-MPT) cofactor (Moco or molybdenum cofactor) to form Mo-molybdopterin guanine dinucleotide (Mo-MGD) cofactor.</text>
</comment>
<comment type="catalytic activity">
    <reaction evidence="1">
        <text>Mo-molybdopterin + GTP + H(+) = Mo-molybdopterin guanine dinucleotide + diphosphate</text>
        <dbReference type="Rhea" id="RHEA:34243"/>
        <dbReference type="ChEBI" id="CHEBI:15378"/>
        <dbReference type="ChEBI" id="CHEBI:33019"/>
        <dbReference type="ChEBI" id="CHEBI:37565"/>
        <dbReference type="ChEBI" id="CHEBI:71302"/>
        <dbReference type="ChEBI" id="CHEBI:71310"/>
        <dbReference type="EC" id="2.7.7.77"/>
    </reaction>
</comment>
<comment type="cofactor">
    <cofactor evidence="1">
        <name>Mg(2+)</name>
        <dbReference type="ChEBI" id="CHEBI:18420"/>
    </cofactor>
</comment>
<comment type="subunit">
    <text evidence="1">Monomer.</text>
</comment>
<comment type="subcellular location">
    <subcellularLocation>
        <location evidence="1">Cytoplasm</location>
    </subcellularLocation>
</comment>
<comment type="domain">
    <text evidence="1">The N-terminal domain determines nucleotide recognition and specific binding, while the C-terminal domain determines the specific binding to the target protein.</text>
</comment>
<comment type="similarity">
    <text evidence="1">Belongs to the MobA family.</text>
</comment>
<evidence type="ECO:0000255" key="1">
    <source>
        <dbReference type="HAMAP-Rule" id="MF_00316"/>
    </source>
</evidence>